<comment type="function">
    <text evidence="1">Is essential for optimal growth.</text>
</comment>
<comment type="subunit">
    <text evidence="2">Homodimer.</text>
</comment>
<comment type="similarity">
    <text evidence="2">Belongs to the class-V pyridoxal-phosphate-dependent aminotransferase family.</text>
</comment>
<comment type="caution">
    <text evidence="2">Lacks the conserved Lysine residue that is involved in covalent pyridoxal phosphate binding in other members of the family.</text>
</comment>
<dbReference type="EMBL" id="AE000516">
    <property type="protein sequence ID" value="AAK48252.1"/>
    <property type="molecule type" value="Genomic_DNA"/>
</dbReference>
<dbReference type="PIR" id="F70695">
    <property type="entry name" value="F70695"/>
</dbReference>
<dbReference type="RefSeq" id="WP_003420595.1">
    <property type="nucleotide sequence ID" value="NZ_KK341227.1"/>
</dbReference>
<dbReference type="SMR" id="P9WQ66"/>
<dbReference type="KEGG" id="mtc:MT3887"/>
<dbReference type="PATRIC" id="fig|83331.31.peg.4182"/>
<dbReference type="HOGENOM" id="CLU_003433_2_2_11"/>
<dbReference type="Proteomes" id="UP000001020">
    <property type="component" value="Chromosome"/>
</dbReference>
<dbReference type="FunFam" id="3.40.640.10:FF:000136">
    <property type="entry name" value="Possible aminotransferase"/>
    <property type="match status" value="1"/>
</dbReference>
<dbReference type="Gene3D" id="3.90.1150.10">
    <property type="entry name" value="Aspartate Aminotransferase, domain 1"/>
    <property type="match status" value="1"/>
</dbReference>
<dbReference type="Gene3D" id="3.40.640.10">
    <property type="entry name" value="Type I PLP-dependent aspartate aminotransferase-like (Major domain)"/>
    <property type="match status" value="1"/>
</dbReference>
<dbReference type="InterPro" id="IPR000192">
    <property type="entry name" value="Aminotrans_V_dom"/>
</dbReference>
<dbReference type="InterPro" id="IPR011340">
    <property type="entry name" value="Cys_dSase-rel"/>
</dbReference>
<dbReference type="InterPro" id="IPR015424">
    <property type="entry name" value="PyrdxlP-dep_Trfase"/>
</dbReference>
<dbReference type="InterPro" id="IPR015421">
    <property type="entry name" value="PyrdxlP-dep_Trfase_major"/>
</dbReference>
<dbReference type="InterPro" id="IPR015422">
    <property type="entry name" value="PyrdxlP-dep_Trfase_small"/>
</dbReference>
<dbReference type="NCBIfam" id="TIGR01976">
    <property type="entry name" value="am_tr_V_VC1184"/>
    <property type="match status" value="1"/>
</dbReference>
<dbReference type="PANTHER" id="PTHR43586">
    <property type="entry name" value="CYSTEINE DESULFURASE"/>
    <property type="match status" value="1"/>
</dbReference>
<dbReference type="PANTHER" id="PTHR43586:SF21">
    <property type="entry name" value="PYRIDOXAL PHOSPHATE (PLP)-DEPENDENT ASPARTATE AMINOTRANSFERASE SUPERFAMILY"/>
    <property type="match status" value="1"/>
</dbReference>
<dbReference type="Pfam" id="PF00266">
    <property type="entry name" value="Aminotran_5"/>
    <property type="match status" value="1"/>
</dbReference>
<dbReference type="SUPFAM" id="SSF53383">
    <property type="entry name" value="PLP-dependent transferases"/>
    <property type="match status" value="1"/>
</dbReference>
<name>Y3778_MYCTO</name>
<keyword id="KW-1185">Reference proteome</keyword>
<protein>
    <recommendedName>
        <fullName>Uncharacterized protein MT3887</fullName>
    </recommendedName>
</protein>
<evidence type="ECO:0000250" key="1"/>
<evidence type="ECO:0000305" key="2"/>
<accession>P9WQ66</accession>
<accession>L0TF82</accession>
<accession>P72044</accession>
<accession>Q7D4V8</accession>
<sequence length="398" mass="41852">MAYDVARVRGLHPSLGDGWVHFDAPAGMLIPDSVATTVSTAFRRSGASTVGAHPSARRSAAVLDAAREAVADLVNADPGGVVLGADRAVLLSLLAEASSSRAGLGYEVIVSRLDDEANIAPWLRAAHRYGAKVKWAEVDIETGELPTWQWESLISKSTRLVAVNSASGTLGGVTDLRAMTKLVHDVGALVVVDHSAAAPYRLLDIRETDADVVTVNAHAWGGPPIGAMVFRDPSVMNSFGSVSTNPYATGPARLEIGVHQFGLLAGVVASIEYLAALDESARGSRRERLAVSMQSADAYLNRVFDYLMVSLRSLPLVMLIGRPEAQIPVVSFAVHKVPADRVVQRLADNGILAIANTGSRVLDVLGVNDVGGAVTVGLAHYSTMAEVDQLVRALASLG</sequence>
<proteinExistence type="inferred from homology"/>
<reference key="1">
    <citation type="journal article" date="2002" name="J. Bacteriol.">
        <title>Whole-genome comparison of Mycobacterium tuberculosis clinical and laboratory strains.</title>
        <authorList>
            <person name="Fleischmann R.D."/>
            <person name="Alland D."/>
            <person name="Eisen J.A."/>
            <person name="Carpenter L."/>
            <person name="White O."/>
            <person name="Peterson J.D."/>
            <person name="DeBoy R.T."/>
            <person name="Dodson R.J."/>
            <person name="Gwinn M.L."/>
            <person name="Haft D.H."/>
            <person name="Hickey E.K."/>
            <person name="Kolonay J.F."/>
            <person name="Nelson W.C."/>
            <person name="Umayam L.A."/>
            <person name="Ermolaeva M.D."/>
            <person name="Salzberg S.L."/>
            <person name="Delcher A."/>
            <person name="Utterback T.R."/>
            <person name="Weidman J.F."/>
            <person name="Khouri H.M."/>
            <person name="Gill J."/>
            <person name="Mikula A."/>
            <person name="Bishai W."/>
            <person name="Jacobs W.R. Jr."/>
            <person name="Venter J.C."/>
            <person name="Fraser C.M."/>
        </authorList>
    </citation>
    <scope>NUCLEOTIDE SEQUENCE [LARGE SCALE GENOMIC DNA]</scope>
    <source>
        <strain>CDC 1551 / Oshkosh</strain>
    </source>
</reference>
<feature type="chain" id="PRO_0000426829" description="Uncharacterized protein MT3887">
    <location>
        <begin position="1"/>
        <end position="398"/>
    </location>
</feature>
<organism>
    <name type="scientific">Mycobacterium tuberculosis (strain CDC 1551 / Oshkosh)</name>
    <dbReference type="NCBI Taxonomy" id="83331"/>
    <lineage>
        <taxon>Bacteria</taxon>
        <taxon>Bacillati</taxon>
        <taxon>Actinomycetota</taxon>
        <taxon>Actinomycetes</taxon>
        <taxon>Mycobacteriales</taxon>
        <taxon>Mycobacteriaceae</taxon>
        <taxon>Mycobacterium</taxon>
        <taxon>Mycobacterium tuberculosis complex</taxon>
    </lineage>
</organism>
<gene>
    <name type="ordered locus">MT3887</name>
</gene>